<feature type="chain" id="PRO_0000260976" description="Large ribosomal subunit protein uL6">
    <location>
        <begin position="1"/>
        <end position="175"/>
    </location>
</feature>
<sequence length="175" mass="18510">MSRVAKKPVSLPKGVELNVQPELISVKGPKGTLTLQKPVGVEIAIDGDVATLSANDPSQIAITGTVRAILANMIKGVSEGFERKLELVGVGYRAAMQGKDLSLALGFSHPLVFVAPEGITLSTPTQTEILVQGADKQRVGEVAAKIRGFRPPEPYKGKGVKYAGEVIIRKEAKKA</sequence>
<dbReference type="EMBL" id="CP000050">
    <property type="protein sequence ID" value="AAY50369.1"/>
    <property type="molecule type" value="Genomic_DNA"/>
</dbReference>
<dbReference type="RefSeq" id="WP_011036130.1">
    <property type="nucleotide sequence ID" value="NZ_CP155948.1"/>
</dbReference>
<dbReference type="SMR" id="Q4URF4"/>
<dbReference type="KEGG" id="xcb:XC_3325"/>
<dbReference type="HOGENOM" id="CLU_065464_1_2_6"/>
<dbReference type="Proteomes" id="UP000000420">
    <property type="component" value="Chromosome"/>
</dbReference>
<dbReference type="GO" id="GO:0022625">
    <property type="term" value="C:cytosolic large ribosomal subunit"/>
    <property type="evidence" value="ECO:0007669"/>
    <property type="project" value="TreeGrafter"/>
</dbReference>
<dbReference type="GO" id="GO:0019843">
    <property type="term" value="F:rRNA binding"/>
    <property type="evidence" value="ECO:0007669"/>
    <property type="project" value="UniProtKB-UniRule"/>
</dbReference>
<dbReference type="GO" id="GO:0003735">
    <property type="term" value="F:structural constituent of ribosome"/>
    <property type="evidence" value="ECO:0007669"/>
    <property type="project" value="InterPro"/>
</dbReference>
<dbReference type="GO" id="GO:0002181">
    <property type="term" value="P:cytoplasmic translation"/>
    <property type="evidence" value="ECO:0007669"/>
    <property type="project" value="TreeGrafter"/>
</dbReference>
<dbReference type="FunFam" id="3.90.930.12:FF:000001">
    <property type="entry name" value="50S ribosomal protein L6"/>
    <property type="match status" value="1"/>
</dbReference>
<dbReference type="Gene3D" id="3.90.930.12">
    <property type="entry name" value="Ribosomal protein L6, alpha-beta domain"/>
    <property type="match status" value="2"/>
</dbReference>
<dbReference type="HAMAP" id="MF_01365_B">
    <property type="entry name" value="Ribosomal_uL6_B"/>
    <property type="match status" value="1"/>
</dbReference>
<dbReference type="InterPro" id="IPR000702">
    <property type="entry name" value="Ribosomal_uL6-like"/>
</dbReference>
<dbReference type="InterPro" id="IPR036789">
    <property type="entry name" value="Ribosomal_uL6-like_a/b-dom_sf"/>
</dbReference>
<dbReference type="InterPro" id="IPR020040">
    <property type="entry name" value="Ribosomal_uL6_a/b-dom"/>
</dbReference>
<dbReference type="InterPro" id="IPR019906">
    <property type="entry name" value="Ribosomal_uL6_bac-type"/>
</dbReference>
<dbReference type="InterPro" id="IPR002358">
    <property type="entry name" value="Ribosomal_uL6_CS"/>
</dbReference>
<dbReference type="NCBIfam" id="TIGR03654">
    <property type="entry name" value="L6_bact"/>
    <property type="match status" value="1"/>
</dbReference>
<dbReference type="PANTHER" id="PTHR11655">
    <property type="entry name" value="60S/50S RIBOSOMAL PROTEIN L6/L9"/>
    <property type="match status" value="1"/>
</dbReference>
<dbReference type="PANTHER" id="PTHR11655:SF14">
    <property type="entry name" value="LARGE RIBOSOMAL SUBUNIT PROTEIN UL6M"/>
    <property type="match status" value="1"/>
</dbReference>
<dbReference type="Pfam" id="PF00347">
    <property type="entry name" value="Ribosomal_L6"/>
    <property type="match status" value="2"/>
</dbReference>
<dbReference type="PIRSF" id="PIRSF002162">
    <property type="entry name" value="Ribosomal_L6"/>
    <property type="match status" value="1"/>
</dbReference>
<dbReference type="PRINTS" id="PR00059">
    <property type="entry name" value="RIBOSOMALL6"/>
</dbReference>
<dbReference type="SUPFAM" id="SSF56053">
    <property type="entry name" value="Ribosomal protein L6"/>
    <property type="match status" value="2"/>
</dbReference>
<dbReference type="PROSITE" id="PS00525">
    <property type="entry name" value="RIBOSOMAL_L6_1"/>
    <property type="match status" value="1"/>
</dbReference>
<protein>
    <recommendedName>
        <fullName evidence="1">Large ribosomal subunit protein uL6</fullName>
    </recommendedName>
    <alternativeName>
        <fullName evidence="2">50S ribosomal protein L6</fullName>
    </alternativeName>
</protein>
<name>RL6_XANC8</name>
<proteinExistence type="inferred from homology"/>
<accession>Q4URF4</accession>
<organism>
    <name type="scientific">Xanthomonas campestris pv. campestris (strain 8004)</name>
    <dbReference type="NCBI Taxonomy" id="314565"/>
    <lineage>
        <taxon>Bacteria</taxon>
        <taxon>Pseudomonadati</taxon>
        <taxon>Pseudomonadota</taxon>
        <taxon>Gammaproteobacteria</taxon>
        <taxon>Lysobacterales</taxon>
        <taxon>Lysobacteraceae</taxon>
        <taxon>Xanthomonas</taxon>
    </lineage>
</organism>
<keyword id="KW-0687">Ribonucleoprotein</keyword>
<keyword id="KW-0689">Ribosomal protein</keyword>
<keyword id="KW-0694">RNA-binding</keyword>
<keyword id="KW-0699">rRNA-binding</keyword>
<comment type="function">
    <text evidence="1">This protein binds to the 23S rRNA, and is important in its secondary structure. It is located near the subunit interface in the base of the L7/L12 stalk, and near the tRNA binding site of the peptidyltransferase center.</text>
</comment>
<comment type="subunit">
    <text evidence="1">Part of the 50S ribosomal subunit.</text>
</comment>
<comment type="similarity">
    <text evidence="1">Belongs to the universal ribosomal protein uL6 family.</text>
</comment>
<reference key="1">
    <citation type="journal article" date="2005" name="Genome Res.">
        <title>Comparative and functional genomic analyses of the pathogenicity of phytopathogen Xanthomonas campestris pv. campestris.</title>
        <authorList>
            <person name="Qian W."/>
            <person name="Jia Y."/>
            <person name="Ren S.-X."/>
            <person name="He Y.-Q."/>
            <person name="Feng J.-X."/>
            <person name="Lu L.-F."/>
            <person name="Sun Q."/>
            <person name="Ying G."/>
            <person name="Tang D.-J."/>
            <person name="Tang H."/>
            <person name="Wu W."/>
            <person name="Hao P."/>
            <person name="Wang L."/>
            <person name="Jiang B.-L."/>
            <person name="Zeng S."/>
            <person name="Gu W.-Y."/>
            <person name="Lu G."/>
            <person name="Rong L."/>
            <person name="Tian Y."/>
            <person name="Yao Z."/>
            <person name="Fu G."/>
            <person name="Chen B."/>
            <person name="Fang R."/>
            <person name="Qiang B."/>
            <person name="Chen Z."/>
            <person name="Zhao G.-P."/>
            <person name="Tang J.-L."/>
            <person name="He C."/>
        </authorList>
    </citation>
    <scope>NUCLEOTIDE SEQUENCE [LARGE SCALE GENOMIC DNA]</scope>
    <source>
        <strain>8004</strain>
    </source>
</reference>
<gene>
    <name evidence="1" type="primary">rplF</name>
    <name type="ordered locus">XC_3325</name>
</gene>
<evidence type="ECO:0000255" key="1">
    <source>
        <dbReference type="HAMAP-Rule" id="MF_01365"/>
    </source>
</evidence>
<evidence type="ECO:0000305" key="2"/>